<feature type="chain" id="PRO_1000024760" description="Adenosylhomocysteinase">
    <location>
        <begin position="1"/>
        <end position="476"/>
    </location>
</feature>
<feature type="binding site" evidence="1">
    <location>
        <position position="67"/>
    </location>
    <ligand>
        <name>substrate</name>
    </ligand>
</feature>
<feature type="binding site" evidence="1">
    <location>
        <position position="142"/>
    </location>
    <ligand>
        <name>substrate</name>
    </ligand>
</feature>
<feature type="binding site" evidence="1">
    <location>
        <position position="202"/>
    </location>
    <ligand>
        <name>substrate</name>
    </ligand>
</feature>
<feature type="binding site" evidence="1">
    <location>
        <begin position="203"/>
        <end position="205"/>
    </location>
    <ligand>
        <name>NAD(+)</name>
        <dbReference type="ChEBI" id="CHEBI:57540"/>
    </ligand>
</feature>
<feature type="binding site" evidence="1">
    <location>
        <position position="232"/>
    </location>
    <ligand>
        <name>substrate</name>
    </ligand>
</feature>
<feature type="binding site" evidence="1">
    <location>
        <position position="236"/>
    </location>
    <ligand>
        <name>substrate</name>
    </ligand>
</feature>
<feature type="binding site" evidence="1">
    <location>
        <position position="237"/>
    </location>
    <ligand>
        <name>NAD(+)</name>
        <dbReference type="ChEBI" id="CHEBI:57540"/>
    </ligand>
</feature>
<feature type="binding site" evidence="1">
    <location>
        <begin position="266"/>
        <end position="271"/>
    </location>
    <ligand>
        <name>NAD(+)</name>
        <dbReference type="ChEBI" id="CHEBI:57540"/>
    </ligand>
</feature>
<feature type="binding site" evidence="1">
    <location>
        <position position="289"/>
    </location>
    <ligand>
        <name>NAD(+)</name>
        <dbReference type="ChEBI" id="CHEBI:57540"/>
    </ligand>
</feature>
<feature type="binding site" evidence="1">
    <location>
        <position position="324"/>
    </location>
    <ligand>
        <name>NAD(+)</name>
        <dbReference type="ChEBI" id="CHEBI:57540"/>
    </ligand>
</feature>
<feature type="binding site" evidence="1">
    <location>
        <begin position="345"/>
        <end position="347"/>
    </location>
    <ligand>
        <name>NAD(+)</name>
        <dbReference type="ChEBI" id="CHEBI:57540"/>
    </ligand>
</feature>
<feature type="binding site" evidence="1">
    <location>
        <position position="390"/>
    </location>
    <ligand>
        <name>NAD(+)</name>
        <dbReference type="ChEBI" id="CHEBI:57540"/>
    </ligand>
</feature>
<sequence length="476" mass="52383">MVATPSATTGLQVAQDYVIADINQAEFGRKELDIAETEMPGLMALREKYGTEKPLKGARIAGSLHMTIQTACLIETLVELGAEVRWASCNIFSTQDHAAAAMAARDIPVFAVKGETLEEYWEYTHRILEWGDGGSPNMILDDGGDATGLVMLGSKAEQDITVLDNPGNEEETFLFASIKKKLAQDPTFYSRTKAQIQGVTEETTTGVARLYKMQKSGELPFPAINVNDSVTKSKFDNLYGCRESLVDSIKRATDVMVAGKQALVMGYGDVGKGSAQSLRGLGATVCIAEVDPICALQAAMEGYRVVRLEDVVEDMDIFVTATGNYQVIRNEHLLKMKDEAIVCNIGHFDNEIDVASLKDYEWENIKPQVDHITLPSGNRIILLAEGRLVNLGCATGHPSFVMSNSFTNQVLAQIELFTKGNEYGKEVYVLPKHLDEMVARLHLDRIGAKLTELSKDQADYINVPVEGPFKPDHYRY</sequence>
<proteinExistence type="inferred from homology"/>
<name>SAHH_SYNPW</name>
<comment type="function">
    <text evidence="1">May play a key role in the regulation of the intracellular concentration of adenosylhomocysteine.</text>
</comment>
<comment type="catalytic activity">
    <reaction evidence="1">
        <text>S-adenosyl-L-homocysteine + H2O = L-homocysteine + adenosine</text>
        <dbReference type="Rhea" id="RHEA:21708"/>
        <dbReference type="ChEBI" id="CHEBI:15377"/>
        <dbReference type="ChEBI" id="CHEBI:16335"/>
        <dbReference type="ChEBI" id="CHEBI:57856"/>
        <dbReference type="ChEBI" id="CHEBI:58199"/>
        <dbReference type="EC" id="3.13.2.1"/>
    </reaction>
</comment>
<comment type="cofactor">
    <cofactor evidence="1">
        <name>NAD(+)</name>
        <dbReference type="ChEBI" id="CHEBI:57540"/>
    </cofactor>
    <text evidence="1">Binds 1 NAD(+) per subunit.</text>
</comment>
<comment type="pathway">
    <text evidence="1">Amino-acid biosynthesis; L-homocysteine biosynthesis; L-homocysteine from S-adenosyl-L-homocysteine: step 1/1.</text>
</comment>
<comment type="subcellular location">
    <subcellularLocation>
        <location evidence="1">Cytoplasm</location>
    </subcellularLocation>
</comment>
<comment type="similarity">
    <text evidence="1">Belongs to the adenosylhomocysteinase family.</text>
</comment>
<gene>
    <name evidence="1" type="primary">ahcY</name>
    <name type="ordered locus">SynWH7803_0169</name>
</gene>
<keyword id="KW-0963">Cytoplasm</keyword>
<keyword id="KW-0378">Hydrolase</keyword>
<keyword id="KW-0520">NAD</keyword>
<keyword id="KW-0554">One-carbon metabolism</keyword>
<keyword id="KW-1185">Reference proteome</keyword>
<reference key="1">
    <citation type="submission" date="2006-05" db="EMBL/GenBank/DDBJ databases">
        <authorList>
            <consortium name="Genoscope"/>
        </authorList>
    </citation>
    <scope>NUCLEOTIDE SEQUENCE [LARGE SCALE GENOMIC DNA]</scope>
    <source>
        <strain>WH7803</strain>
    </source>
</reference>
<evidence type="ECO:0000255" key="1">
    <source>
        <dbReference type="HAMAP-Rule" id="MF_00563"/>
    </source>
</evidence>
<organism>
    <name type="scientific">Synechococcus sp. (strain WH7803)</name>
    <dbReference type="NCBI Taxonomy" id="32051"/>
    <lineage>
        <taxon>Bacteria</taxon>
        <taxon>Bacillati</taxon>
        <taxon>Cyanobacteriota</taxon>
        <taxon>Cyanophyceae</taxon>
        <taxon>Synechococcales</taxon>
        <taxon>Synechococcaceae</taxon>
        <taxon>Synechococcus</taxon>
    </lineage>
</organism>
<protein>
    <recommendedName>
        <fullName evidence="1">Adenosylhomocysteinase</fullName>
        <ecNumber evidence="1">3.13.2.1</ecNumber>
    </recommendedName>
    <alternativeName>
        <fullName evidence="1">S-adenosyl-L-homocysteine hydrolase</fullName>
        <shortName evidence="1">AdoHcyase</shortName>
    </alternativeName>
</protein>
<dbReference type="EC" id="3.13.2.1" evidence="1"/>
<dbReference type="EMBL" id="CT971583">
    <property type="protein sequence ID" value="CAK22595.1"/>
    <property type="molecule type" value="Genomic_DNA"/>
</dbReference>
<dbReference type="SMR" id="A5GI30"/>
<dbReference type="STRING" id="32051.SynWH7803_0169"/>
<dbReference type="KEGG" id="syx:SynWH7803_0169"/>
<dbReference type="eggNOG" id="COG0499">
    <property type="taxonomic scope" value="Bacteria"/>
</dbReference>
<dbReference type="HOGENOM" id="CLU_025194_2_1_3"/>
<dbReference type="OrthoDB" id="9802717at2"/>
<dbReference type="UniPathway" id="UPA00314">
    <property type="reaction ID" value="UER00076"/>
</dbReference>
<dbReference type="Proteomes" id="UP000001566">
    <property type="component" value="Chromosome"/>
</dbReference>
<dbReference type="GO" id="GO:0005829">
    <property type="term" value="C:cytosol"/>
    <property type="evidence" value="ECO:0007669"/>
    <property type="project" value="TreeGrafter"/>
</dbReference>
<dbReference type="GO" id="GO:0004013">
    <property type="term" value="F:adenosylhomocysteinase activity"/>
    <property type="evidence" value="ECO:0007669"/>
    <property type="project" value="UniProtKB-UniRule"/>
</dbReference>
<dbReference type="GO" id="GO:0071269">
    <property type="term" value="P:L-homocysteine biosynthetic process"/>
    <property type="evidence" value="ECO:0007669"/>
    <property type="project" value="UniProtKB-UniRule"/>
</dbReference>
<dbReference type="GO" id="GO:0006730">
    <property type="term" value="P:one-carbon metabolic process"/>
    <property type="evidence" value="ECO:0007669"/>
    <property type="project" value="UniProtKB-KW"/>
</dbReference>
<dbReference type="GO" id="GO:0033353">
    <property type="term" value="P:S-adenosylmethionine cycle"/>
    <property type="evidence" value="ECO:0007669"/>
    <property type="project" value="TreeGrafter"/>
</dbReference>
<dbReference type="CDD" id="cd00401">
    <property type="entry name" value="SAHH"/>
    <property type="match status" value="1"/>
</dbReference>
<dbReference type="FunFam" id="3.40.50.720:FF:000004">
    <property type="entry name" value="Adenosylhomocysteinase"/>
    <property type="match status" value="1"/>
</dbReference>
<dbReference type="Gene3D" id="3.40.50.1480">
    <property type="entry name" value="Adenosylhomocysteinase-like"/>
    <property type="match status" value="1"/>
</dbReference>
<dbReference type="Gene3D" id="3.40.50.720">
    <property type="entry name" value="NAD(P)-binding Rossmann-like Domain"/>
    <property type="match status" value="1"/>
</dbReference>
<dbReference type="HAMAP" id="MF_00563">
    <property type="entry name" value="AdoHcyase"/>
    <property type="match status" value="1"/>
</dbReference>
<dbReference type="InterPro" id="IPR042172">
    <property type="entry name" value="Adenosylhomocyst_ase-like_sf"/>
</dbReference>
<dbReference type="InterPro" id="IPR000043">
    <property type="entry name" value="Adenosylhomocysteinase-like"/>
</dbReference>
<dbReference type="InterPro" id="IPR015878">
    <property type="entry name" value="Ado_hCys_hydrolase_NAD-bd"/>
</dbReference>
<dbReference type="InterPro" id="IPR036291">
    <property type="entry name" value="NAD(P)-bd_dom_sf"/>
</dbReference>
<dbReference type="InterPro" id="IPR020082">
    <property type="entry name" value="S-Ado-L-homoCys_hydrolase_CS"/>
</dbReference>
<dbReference type="NCBIfam" id="TIGR00936">
    <property type="entry name" value="ahcY"/>
    <property type="match status" value="1"/>
</dbReference>
<dbReference type="NCBIfam" id="NF004005">
    <property type="entry name" value="PRK05476.2-3"/>
    <property type="match status" value="1"/>
</dbReference>
<dbReference type="PANTHER" id="PTHR23420">
    <property type="entry name" value="ADENOSYLHOMOCYSTEINASE"/>
    <property type="match status" value="1"/>
</dbReference>
<dbReference type="PANTHER" id="PTHR23420:SF0">
    <property type="entry name" value="ADENOSYLHOMOCYSTEINASE"/>
    <property type="match status" value="1"/>
</dbReference>
<dbReference type="Pfam" id="PF05221">
    <property type="entry name" value="AdoHcyase"/>
    <property type="match status" value="1"/>
</dbReference>
<dbReference type="Pfam" id="PF00670">
    <property type="entry name" value="AdoHcyase_NAD"/>
    <property type="match status" value="1"/>
</dbReference>
<dbReference type="PIRSF" id="PIRSF001109">
    <property type="entry name" value="Ad_hcy_hydrolase"/>
    <property type="match status" value="1"/>
</dbReference>
<dbReference type="SMART" id="SM00996">
    <property type="entry name" value="AdoHcyase"/>
    <property type="match status" value="1"/>
</dbReference>
<dbReference type="SMART" id="SM00997">
    <property type="entry name" value="AdoHcyase_NAD"/>
    <property type="match status" value="1"/>
</dbReference>
<dbReference type="SUPFAM" id="SSF52283">
    <property type="entry name" value="Formate/glycerate dehydrogenase catalytic domain-like"/>
    <property type="match status" value="1"/>
</dbReference>
<dbReference type="SUPFAM" id="SSF51735">
    <property type="entry name" value="NAD(P)-binding Rossmann-fold domains"/>
    <property type="match status" value="1"/>
</dbReference>
<dbReference type="PROSITE" id="PS00738">
    <property type="entry name" value="ADOHCYASE_1"/>
    <property type="match status" value="1"/>
</dbReference>
<dbReference type="PROSITE" id="PS00739">
    <property type="entry name" value="ADOHCYASE_2"/>
    <property type="match status" value="1"/>
</dbReference>
<accession>A5GI30</accession>